<reference key="1">
    <citation type="submission" date="2003-06" db="EMBL/GenBank/DDBJ databases">
        <title>The complete genome sequence of Haemophilus ducreyi.</title>
        <authorList>
            <person name="Munson R.S. Jr."/>
            <person name="Ray W.C."/>
            <person name="Mahairas G."/>
            <person name="Sabo P."/>
            <person name="Mungur R."/>
            <person name="Johnson L."/>
            <person name="Nguyen D."/>
            <person name="Wang J."/>
            <person name="Forst C."/>
            <person name="Hood L."/>
        </authorList>
    </citation>
    <scope>NUCLEOTIDE SEQUENCE [LARGE SCALE GENOMIC DNA]</scope>
    <source>
        <strain>35000HP / ATCC 700724</strain>
    </source>
</reference>
<proteinExistence type="inferred from homology"/>
<gene>
    <name type="ordered locus">HD_1349</name>
</gene>
<keyword id="KW-1185">Reference proteome</keyword>
<evidence type="ECO:0000255" key="1">
    <source>
        <dbReference type="HAMAP-Rule" id="MF_00338"/>
    </source>
</evidence>
<comment type="similarity">
    <text evidence="1">Belongs to the UPF0145 family.</text>
</comment>
<sequence>MIITTTPTVENRQIIEYKGLVFGEVVAGANIIRDFFASITDMIGGRSGVYEDKLNVARQEALVELQKQARNIGANAVIGVSIQYQSMGKKDMFIIVATGTAVVIG</sequence>
<organism>
    <name type="scientific">Haemophilus ducreyi (strain 35000HP / ATCC 700724)</name>
    <dbReference type="NCBI Taxonomy" id="233412"/>
    <lineage>
        <taxon>Bacteria</taxon>
        <taxon>Pseudomonadati</taxon>
        <taxon>Pseudomonadota</taxon>
        <taxon>Gammaproteobacteria</taxon>
        <taxon>Pasteurellales</taxon>
        <taxon>Pasteurellaceae</taxon>
        <taxon>Haemophilus</taxon>
    </lineage>
</organism>
<dbReference type="EMBL" id="AE017143">
    <property type="protein sequence ID" value="AAP96163.1"/>
    <property type="molecule type" value="Genomic_DNA"/>
</dbReference>
<dbReference type="RefSeq" id="WP_010945212.1">
    <property type="nucleotide sequence ID" value="NC_002940.2"/>
</dbReference>
<dbReference type="SMR" id="Q7VLS2"/>
<dbReference type="STRING" id="233412.HD_1349"/>
<dbReference type="KEGG" id="hdu:HD_1349"/>
<dbReference type="eggNOG" id="COG0393">
    <property type="taxonomic scope" value="Bacteria"/>
</dbReference>
<dbReference type="HOGENOM" id="CLU_117144_3_2_6"/>
<dbReference type="OrthoDB" id="9796448at2"/>
<dbReference type="Proteomes" id="UP000001022">
    <property type="component" value="Chromosome"/>
</dbReference>
<dbReference type="Gene3D" id="3.30.110.70">
    <property type="entry name" value="Hypothetical protein apc22750. Chain B"/>
    <property type="match status" value="1"/>
</dbReference>
<dbReference type="HAMAP" id="MF_00338">
    <property type="entry name" value="UPF0145"/>
    <property type="match status" value="1"/>
</dbReference>
<dbReference type="InterPro" id="IPR035439">
    <property type="entry name" value="UPF0145_dom_sf"/>
</dbReference>
<dbReference type="InterPro" id="IPR002765">
    <property type="entry name" value="UPF0145_YbjQ-like"/>
</dbReference>
<dbReference type="PANTHER" id="PTHR34068">
    <property type="entry name" value="UPF0145 PROTEIN YBJQ"/>
    <property type="match status" value="1"/>
</dbReference>
<dbReference type="PANTHER" id="PTHR34068:SF1">
    <property type="entry name" value="UPF0145 PROTEIN YBJQ"/>
    <property type="match status" value="1"/>
</dbReference>
<dbReference type="Pfam" id="PF01906">
    <property type="entry name" value="YbjQ_1"/>
    <property type="match status" value="1"/>
</dbReference>
<dbReference type="SUPFAM" id="SSF117782">
    <property type="entry name" value="YbjQ-like"/>
    <property type="match status" value="1"/>
</dbReference>
<name>Y1349_HAEDU</name>
<protein>
    <recommendedName>
        <fullName evidence="1">UPF0145 protein HD_1349</fullName>
    </recommendedName>
</protein>
<accession>Q7VLS2</accession>
<feature type="chain" id="PRO_0000138469" description="UPF0145 protein HD_1349">
    <location>
        <begin position="1"/>
        <end position="105"/>
    </location>
</feature>